<reference key="1">
    <citation type="journal article" date="2001" name="Lancet">
        <title>Whole genome sequencing of meticillin-resistant Staphylococcus aureus.</title>
        <authorList>
            <person name="Kuroda M."/>
            <person name="Ohta T."/>
            <person name="Uchiyama I."/>
            <person name="Baba T."/>
            <person name="Yuzawa H."/>
            <person name="Kobayashi I."/>
            <person name="Cui L."/>
            <person name="Oguchi A."/>
            <person name="Aoki K."/>
            <person name="Nagai Y."/>
            <person name="Lian J.-Q."/>
            <person name="Ito T."/>
            <person name="Kanamori M."/>
            <person name="Matsumaru H."/>
            <person name="Maruyama A."/>
            <person name="Murakami H."/>
            <person name="Hosoyama A."/>
            <person name="Mizutani-Ui Y."/>
            <person name="Takahashi N.K."/>
            <person name="Sawano T."/>
            <person name="Inoue R."/>
            <person name="Kaito C."/>
            <person name="Sekimizu K."/>
            <person name="Hirakawa H."/>
            <person name="Kuhara S."/>
            <person name="Goto S."/>
            <person name="Yabuzaki J."/>
            <person name="Kanehisa M."/>
            <person name="Yamashita A."/>
            <person name="Oshima K."/>
            <person name="Furuya K."/>
            <person name="Yoshino C."/>
            <person name="Shiba T."/>
            <person name="Hattori M."/>
            <person name="Ogasawara N."/>
            <person name="Hayashi H."/>
            <person name="Hiramatsu K."/>
        </authorList>
    </citation>
    <scope>NUCLEOTIDE SEQUENCE [LARGE SCALE GENOMIC DNA]</scope>
    <source>
        <strain>N315</strain>
    </source>
</reference>
<reference key="2">
    <citation type="submission" date="2007-10" db="UniProtKB">
        <title>Shotgun proteomic analysis of total and membrane protein extracts of S. aureus strain N315.</title>
        <authorList>
            <person name="Vaezzadeh A.R."/>
            <person name="Deshusses J."/>
            <person name="Lescuyer P."/>
            <person name="Hochstrasser D.F."/>
        </authorList>
    </citation>
    <scope>IDENTIFICATION BY MASS SPECTROMETRY [LARGE SCALE ANALYSIS]</scope>
    <source>
        <strain>N315</strain>
    </source>
</reference>
<keyword id="KW-0067">ATP-binding</keyword>
<keyword id="KW-0963">Cytoplasm</keyword>
<keyword id="KW-0235">DNA replication</keyword>
<keyword id="KW-0238">DNA-binding</keyword>
<keyword id="KW-0446">Lipid-binding</keyword>
<keyword id="KW-0547">Nucleotide-binding</keyword>
<gene>
    <name evidence="1" type="primary">dnaA</name>
    <name type="ordered locus">SA0001</name>
</gene>
<accession>P68866</accession>
<accession>P49994</accession>
<evidence type="ECO:0000255" key="1">
    <source>
        <dbReference type="HAMAP-Rule" id="MF_00377"/>
    </source>
</evidence>
<dbReference type="EMBL" id="BA000018">
    <property type="protein sequence ID" value="BAB41217.1"/>
    <property type="molecule type" value="Genomic_DNA"/>
</dbReference>
<dbReference type="RefSeq" id="WP_001290433.1">
    <property type="nucleotide sequence ID" value="NC_002745.2"/>
</dbReference>
<dbReference type="SMR" id="P68866"/>
<dbReference type="EnsemblBacteria" id="BAB41217">
    <property type="protein sequence ID" value="BAB41217"/>
    <property type="gene ID" value="BAB41217"/>
</dbReference>
<dbReference type="KEGG" id="sau:SA0001"/>
<dbReference type="HOGENOM" id="CLU_026910_3_1_9"/>
<dbReference type="GO" id="GO:0005737">
    <property type="term" value="C:cytoplasm"/>
    <property type="evidence" value="ECO:0007669"/>
    <property type="project" value="UniProtKB-SubCell"/>
</dbReference>
<dbReference type="GO" id="GO:0005886">
    <property type="term" value="C:plasma membrane"/>
    <property type="evidence" value="ECO:0007669"/>
    <property type="project" value="TreeGrafter"/>
</dbReference>
<dbReference type="GO" id="GO:0005524">
    <property type="term" value="F:ATP binding"/>
    <property type="evidence" value="ECO:0007669"/>
    <property type="project" value="UniProtKB-UniRule"/>
</dbReference>
<dbReference type="GO" id="GO:0016887">
    <property type="term" value="F:ATP hydrolysis activity"/>
    <property type="evidence" value="ECO:0007669"/>
    <property type="project" value="InterPro"/>
</dbReference>
<dbReference type="GO" id="GO:0003688">
    <property type="term" value="F:DNA replication origin binding"/>
    <property type="evidence" value="ECO:0007669"/>
    <property type="project" value="UniProtKB-UniRule"/>
</dbReference>
<dbReference type="GO" id="GO:0008289">
    <property type="term" value="F:lipid binding"/>
    <property type="evidence" value="ECO:0007669"/>
    <property type="project" value="UniProtKB-KW"/>
</dbReference>
<dbReference type="GO" id="GO:0006270">
    <property type="term" value="P:DNA replication initiation"/>
    <property type="evidence" value="ECO:0007669"/>
    <property type="project" value="UniProtKB-UniRule"/>
</dbReference>
<dbReference type="GO" id="GO:0006275">
    <property type="term" value="P:regulation of DNA replication"/>
    <property type="evidence" value="ECO:0007669"/>
    <property type="project" value="UniProtKB-UniRule"/>
</dbReference>
<dbReference type="CDD" id="cd00009">
    <property type="entry name" value="AAA"/>
    <property type="match status" value="1"/>
</dbReference>
<dbReference type="CDD" id="cd06571">
    <property type="entry name" value="Bac_DnaA_C"/>
    <property type="match status" value="1"/>
</dbReference>
<dbReference type="FunFam" id="1.10.1750.10:FF:000003">
    <property type="entry name" value="Chromosomal replication initiator protein DnaA"/>
    <property type="match status" value="1"/>
</dbReference>
<dbReference type="FunFam" id="1.10.8.60:FF:000003">
    <property type="entry name" value="Chromosomal replication initiator protein DnaA"/>
    <property type="match status" value="1"/>
</dbReference>
<dbReference type="FunFam" id="3.40.50.300:FF:000150">
    <property type="entry name" value="Chromosomal replication initiator protein DnaA"/>
    <property type="match status" value="1"/>
</dbReference>
<dbReference type="Gene3D" id="1.10.1750.10">
    <property type="match status" value="1"/>
</dbReference>
<dbReference type="Gene3D" id="1.10.8.60">
    <property type="match status" value="1"/>
</dbReference>
<dbReference type="Gene3D" id="3.30.300.180">
    <property type="match status" value="1"/>
</dbReference>
<dbReference type="Gene3D" id="3.40.50.300">
    <property type="entry name" value="P-loop containing nucleotide triphosphate hydrolases"/>
    <property type="match status" value="1"/>
</dbReference>
<dbReference type="HAMAP" id="MF_00377">
    <property type="entry name" value="DnaA_bact"/>
    <property type="match status" value="1"/>
</dbReference>
<dbReference type="InterPro" id="IPR003593">
    <property type="entry name" value="AAA+_ATPase"/>
</dbReference>
<dbReference type="InterPro" id="IPR001957">
    <property type="entry name" value="Chromosome_initiator_DnaA"/>
</dbReference>
<dbReference type="InterPro" id="IPR020591">
    <property type="entry name" value="Chromosome_initiator_DnaA-like"/>
</dbReference>
<dbReference type="InterPro" id="IPR018312">
    <property type="entry name" value="Chromosome_initiator_DnaA_CS"/>
</dbReference>
<dbReference type="InterPro" id="IPR013159">
    <property type="entry name" value="DnaA_C"/>
</dbReference>
<dbReference type="InterPro" id="IPR013317">
    <property type="entry name" value="DnaA_dom"/>
</dbReference>
<dbReference type="InterPro" id="IPR024633">
    <property type="entry name" value="DnaA_N_dom"/>
</dbReference>
<dbReference type="InterPro" id="IPR038454">
    <property type="entry name" value="DnaA_N_sf"/>
</dbReference>
<dbReference type="InterPro" id="IPR027417">
    <property type="entry name" value="P-loop_NTPase"/>
</dbReference>
<dbReference type="InterPro" id="IPR010921">
    <property type="entry name" value="Trp_repressor/repl_initiator"/>
</dbReference>
<dbReference type="NCBIfam" id="TIGR00362">
    <property type="entry name" value="DnaA"/>
    <property type="match status" value="1"/>
</dbReference>
<dbReference type="PANTHER" id="PTHR30050">
    <property type="entry name" value="CHROMOSOMAL REPLICATION INITIATOR PROTEIN DNAA"/>
    <property type="match status" value="1"/>
</dbReference>
<dbReference type="PANTHER" id="PTHR30050:SF2">
    <property type="entry name" value="CHROMOSOMAL REPLICATION INITIATOR PROTEIN DNAA"/>
    <property type="match status" value="1"/>
</dbReference>
<dbReference type="Pfam" id="PF00308">
    <property type="entry name" value="Bac_DnaA"/>
    <property type="match status" value="1"/>
</dbReference>
<dbReference type="Pfam" id="PF08299">
    <property type="entry name" value="Bac_DnaA_C"/>
    <property type="match status" value="1"/>
</dbReference>
<dbReference type="Pfam" id="PF11638">
    <property type="entry name" value="DnaA_N"/>
    <property type="match status" value="1"/>
</dbReference>
<dbReference type="PRINTS" id="PR00051">
    <property type="entry name" value="DNAA"/>
</dbReference>
<dbReference type="SMART" id="SM00382">
    <property type="entry name" value="AAA"/>
    <property type="match status" value="1"/>
</dbReference>
<dbReference type="SMART" id="SM00760">
    <property type="entry name" value="Bac_DnaA_C"/>
    <property type="match status" value="1"/>
</dbReference>
<dbReference type="SUPFAM" id="SSF52540">
    <property type="entry name" value="P-loop containing nucleoside triphosphate hydrolases"/>
    <property type="match status" value="1"/>
</dbReference>
<dbReference type="SUPFAM" id="SSF48295">
    <property type="entry name" value="TrpR-like"/>
    <property type="match status" value="1"/>
</dbReference>
<dbReference type="PROSITE" id="PS01008">
    <property type="entry name" value="DNAA"/>
    <property type="match status" value="1"/>
</dbReference>
<organism>
    <name type="scientific">Staphylococcus aureus (strain N315)</name>
    <dbReference type="NCBI Taxonomy" id="158879"/>
    <lineage>
        <taxon>Bacteria</taxon>
        <taxon>Bacillati</taxon>
        <taxon>Bacillota</taxon>
        <taxon>Bacilli</taxon>
        <taxon>Bacillales</taxon>
        <taxon>Staphylococcaceae</taxon>
        <taxon>Staphylococcus</taxon>
    </lineage>
</organism>
<sequence length="453" mass="51966">MSEKEIWEKVLEIAQEKLSAVSYSTFLKDTELYTIKDGEAIVLSSIPFNANWLNQQYAEIIQAILFDVVGYEVKPHFITTEELANYSNNETATPKETTKPSTETTEDNHVLGREQFNAHNTFDTFVIGPGNRFPHAASLAVAEAPAKAYNPLFIYGGVGLGKTHLMHAIGHHVLDNNPDAKVIYTSSEKFTNEFIKSIRDNEGEAFRERYRNIDVLLIDDIQFIQNKVQTQEEFFYTFNELHQNNKQIVISSDRPPKEIAQLEDRLRSRFEWGLIVDITPPDYETRMAILQKKIEEEKLDIPPEALNYIANQIQSNIRELEGALTRLLAYSQLLGKPITTELTAEALKDIIQAPKSKKITIQDIQKIVGQYYNVRIEDFSAKKRTKSIAYPRQIAMYLSRELTDFSLPKIGEEFGGRDHTTVIHAHEKISKDLKEDPIFKQEVENLEKEIRNV</sequence>
<name>DNAA_STAAN</name>
<comment type="function">
    <text evidence="1">Plays an essential role in the initiation and regulation of chromosomal replication. ATP-DnaA binds to the origin of replication (oriC) to initiate formation of the DNA replication initiation complex once per cell cycle. Binds the DnaA box (a 9 base pair repeat at the origin) and separates the double-stranded (ds)DNA. Forms a right-handed helical filament on oriC DNA; dsDNA binds to the exterior of the filament while single-stranded (ss)DNA is stabiized in the filament's interior. The ATP-DnaA-oriC complex binds and stabilizes one strand of the AT-rich DNA unwinding element (DUE), permitting loading of DNA polymerase. After initiation quickly degrades to an ADP-DnaA complex that is not apt for DNA replication. Binds acidic phospholipids.</text>
</comment>
<comment type="subunit">
    <text evidence="1">Oligomerizes as a right-handed, spiral filament on DNA at oriC.</text>
</comment>
<comment type="subcellular location">
    <subcellularLocation>
        <location evidence="1">Cytoplasm</location>
    </subcellularLocation>
</comment>
<comment type="domain">
    <text evidence="1">Domain I is involved in oligomerization and binding regulators, domain II is flexibile and of varying length in different bacteria, domain III forms the AAA+ region, while domain IV binds dsDNA.</text>
</comment>
<comment type="similarity">
    <text evidence="1">Belongs to the DnaA family.</text>
</comment>
<protein>
    <recommendedName>
        <fullName evidence="1">Chromosomal replication initiator protein DnaA</fullName>
    </recommendedName>
</protein>
<feature type="chain" id="PRO_0000114260" description="Chromosomal replication initiator protein DnaA">
    <location>
        <begin position="1"/>
        <end position="453"/>
    </location>
</feature>
<feature type="region of interest" description="Domain I, interacts with DnaA modulators" evidence="1">
    <location>
        <begin position="1"/>
        <end position="71"/>
    </location>
</feature>
<feature type="region of interest" description="Domain II" evidence="1">
    <location>
        <begin position="71"/>
        <end position="114"/>
    </location>
</feature>
<feature type="region of interest" description="Domain III, AAA+ region" evidence="1">
    <location>
        <begin position="115"/>
        <end position="331"/>
    </location>
</feature>
<feature type="region of interest" description="Domain IV, binds dsDNA" evidence="1">
    <location>
        <begin position="332"/>
        <end position="453"/>
    </location>
</feature>
<feature type="binding site" evidence="1">
    <location>
        <position position="159"/>
    </location>
    <ligand>
        <name>ATP</name>
        <dbReference type="ChEBI" id="CHEBI:30616"/>
    </ligand>
</feature>
<feature type="binding site" evidence="1">
    <location>
        <position position="161"/>
    </location>
    <ligand>
        <name>ATP</name>
        <dbReference type="ChEBI" id="CHEBI:30616"/>
    </ligand>
</feature>
<feature type="binding site" evidence="1">
    <location>
        <position position="162"/>
    </location>
    <ligand>
        <name>ATP</name>
        <dbReference type="ChEBI" id="CHEBI:30616"/>
    </ligand>
</feature>
<feature type="binding site" evidence="1">
    <location>
        <position position="163"/>
    </location>
    <ligand>
        <name>ATP</name>
        <dbReference type="ChEBI" id="CHEBI:30616"/>
    </ligand>
</feature>
<proteinExistence type="evidence at protein level"/>